<evidence type="ECO:0000250" key="1"/>
<evidence type="ECO:0000250" key="2">
    <source>
        <dbReference type="UniProtKB" id="Q8K3Y3"/>
    </source>
</evidence>
<evidence type="ECO:0000250" key="3">
    <source>
        <dbReference type="UniProtKB" id="Q9H9Z2"/>
    </source>
</evidence>
<evidence type="ECO:0000255" key="4">
    <source>
        <dbReference type="PROSITE-ProRule" id="PRU00047"/>
    </source>
</evidence>
<evidence type="ECO:0000256" key="5">
    <source>
        <dbReference type="SAM" id="MobiDB-lite"/>
    </source>
</evidence>
<evidence type="ECO:0000305" key="6"/>
<keyword id="KW-0963">Cytoplasm</keyword>
<keyword id="KW-0256">Endoplasmic reticulum</keyword>
<keyword id="KW-0479">Metal-binding</keyword>
<keyword id="KW-0539">Nucleus</keyword>
<keyword id="KW-1185">Reference proteome</keyword>
<keyword id="KW-0677">Repeat</keyword>
<keyword id="KW-0694">RNA-binding</keyword>
<keyword id="KW-0943">RNA-mediated gene silencing</keyword>
<keyword id="KW-0862">Zinc</keyword>
<keyword id="KW-0863">Zinc-finger</keyword>
<dbReference type="EMBL" id="DQ127226">
    <property type="protein sequence ID" value="AAZ38895.2"/>
    <property type="molecule type" value="mRNA"/>
</dbReference>
<dbReference type="RefSeq" id="NP_001026944.2">
    <property type="nucleotide sequence ID" value="NM_001031774.2"/>
</dbReference>
<dbReference type="SMR" id="Q45KJ5"/>
<dbReference type="FunCoup" id="Q45KJ5">
    <property type="interactions" value="29"/>
</dbReference>
<dbReference type="STRING" id="9031.ENSGALP00000056558"/>
<dbReference type="PaxDb" id="9031-ENSGALP00000000528"/>
<dbReference type="GeneID" id="428206"/>
<dbReference type="KEGG" id="gga:428206"/>
<dbReference type="CTD" id="79727"/>
<dbReference type="VEuPathDB" id="HostDB:geneid_428206"/>
<dbReference type="eggNOG" id="KOG3070">
    <property type="taxonomic scope" value="Eukaryota"/>
</dbReference>
<dbReference type="InParanoid" id="Q45KJ5"/>
<dbReference type="OMA" id="NEPQPLH"/>
<dbReference type="OrthoDB" id="422005at2759"/>
<dbReference type="PhylomeDB" id="Q45KJ5"/>
<dbReference type="PRO" id="PR:Q45KJ5"/>
<dbReference type="Proteomes" id="UP000000539">
    <property type="component" value="Unassembled WGS sequence"/>
</dbReference>
<dbReference type="GO" id="GO:0005737">
    <property type="term" value="C:cytoplasm"/>
    <property type="evidence" value="ECO:0000250"/>
    <property type="project" value="UniProtKB"/>
</dbReference>
<dbReference type="GO" id="GO:0010494">
    <property type="term" value="C:cytoplasmic stress granule"/>
    <property type="evidence" value="ECO:0000250"/>
    <property type="project" value="UniProtKB"/>
</dbReference>
<dbReference type="GO" id="GO:0005730">
    <property type="term" value="C:nucleolus"/>
    <property type="evidence" value="ECO:0007669"/>
    <property type="project" value="UniProtKB-SubCell"/>
</dbReference>
<dbReference type="GO" id="GO:0005634">
    <property type="term" value="C:nucleus"/>
    <property type="evidence" value="ECO:0000250"/>
    <property type="project" value="UniProtKB"/>
</dbReference>
<dbReference type="GO" id="GO:0000932">
    <property type="term" value="C:P-body"/>
    <property type="evidence" value="ECO:0000250"/>
    <property type="project" value="UniProtKB"/>
</dbReference>
<dbReference type="GO" id="GO:0005791">
    <property type="term" value="C:rough endoplasmic reticulum"/>
    <property type="evidence" value="ECO:0007669"/>
    <property type="project" value="UniProtKB-SubCell"/>
</dbReference>
<dbReference type="GO" id="GO:0003729">
    <property type="term" value="F:mRNA binding"/>
    <property type="evidence" value="ECO:0000250"/>
    <property type="project" value="UniProtKB"/>
</dbReference>
<dbReference type="GO" id="GO:0003723">
    <property type="term" value="F:RNA binding"/>
    <property type="evidence" value="ECO:0000250"/>
    <property type="project" value="UniProtKB"/>
</dbReference>
<dbReference type="GO" id="GO:0008270">
    <property type="term" value="F:zinc ion binding"/>
    <property type="evidence" value="ECO:0007669"/>
    <property type="project" value="UniProtKB-KW"/>
</dbReference>
<dbReference type="GO" id="GO:2000767">
    <property type="term" value="P:positive regulation of cytoplasmic translation"/>
    <property type="evidence" value="ECO:0000250"/>
    <property type="project" value="UniProtKB"/>
</dbReference>
<dbReference type="GO" id="GO:0031054">
    <property type="term" value="P:pre-miRNA processing"/>
    <property type="evidence" value="ECO:0000250"/>
    <property type="project" value="UniProtKB"/>
</dbReference>
<dbReference type="GO" id="GO:0019827">
    <property type="term" value="P:stem cell population maintenance"/>
    <property type="evidence" value="ECO:0000250"/>
    <property type="project" value="UniProtKB"/>
</dbReference>
<dbReference type="CDD" id="cd04458">
    <property type="entry name" value="CSP_CDS"/>
    <property type="match status" value="1"/>
</dbReference>
<dbReference type="FunFam" id="4.10.60.10:FF:000007">
    <property type="entry name" value="Protein lin-28 homolog A"/>
    <property type="match status" value="1"/>
</dbReference>
<dbReference type="FunFam" id="2.40.50.140:FF:000087">
    <property type="entry name" value="Protein lin-28 homolog B"/>
    <property type="match status" value="1"/>
</dbReference>
<dbReference type="Gene3D" id="2.40.50.140">
    <property type="entry name" value="Nucleic acid-binding proteins"/>
    <property type="match status" value="1"/>
</dbReference>
<dbReference type="Gene3D" id="4.10.60.10">
    <property type="entry name" value="Zinc finger, CCHC-type"/>
    <property type="match status" value="1"/>
</dbReference>
<dbReference type="InterPro" id="IPR011129">
    <property type="entry name" value="CSD"/>
</dbReference>
<dbReference type="InterPro" id="IPR002059">
    <property type="entry name" value="CSP_DNA-bd"/>
</dbReference>
<dbReference type="InterPro" id="IPR051373">
    <property type="entry name" value="Lin-28_RNA-binding"/>
</dbReference>
<dbReference type="InterPro" id="IPR054081">
    <property type="entry name" value="Lin-28A-like_Znf-CCHC_2"/>
</dbReference>
<dbReference type="InterPro" id="IPR012340">
    <property type="entry name" value="NA-bd_OB-fold"/>
</dbReference>
<dbReference type="InterPro" id="IPR001878">
    <property type="entry name" value="Znf_CCHC"/>
</dbReference>
<dbReference type="InterPro" id="IPR036875">
    <property type="entry name" value="Znf_CCHC_sf"/>
</dbReference>
<dbReference type="PANTHER" id="PTHR46109">
    <property type="entry name" value="PROTEIN LIN-28"/>
    <property type="match status" value="1"/>
</dbReference>
<dbReference type="PANTHER" id="PTHR46109:SF2">
    <property type="entry name" value="PROTEIN LIN-28 HOMOLOG A"/>
    <property type="match status" value="1"/>
</dbReference>
<dbReference type="Pfam" id="PF00313">
    <property type="entry name" value="CSD"/>
    <property type="match status" value="1"/>
</dbReference>
<dbReference type="Pfam" id="PF21890">
    <property type="entry name" value="Lin-28A-like_zf-CCHC_2"/>
    <property type="match status" value="1"/>
</dbReference>
<dbReference type="Pfam" id="PF00098">
    <property type="entry name" value="zf-CCHC"/>
    <property type="match status" value="1"/>
</dbReference>
<dbReference type="PRINTS" id="PR00050">
    <property type="entry name" value="COLDSHOCK"/>
</dbReference>
<dbReference type="SMART" id="SM00357">
    <property type="entry name" value="CSP"/>
    <property type="match status" value="1"/>
</dbReference>
<dbReference type="SMART" id="SM00343">
    <property type="entry name" value="ZnF_C2HC"/>
    <property type="match status" value="2"/>
</dbReference>
<dbReference type="SUPFAM" id="SSF50249">
    <property type="entry name" value="Nucleic acid-binding proteins"/>
    <property type="match status" value="1"/>
</dbReference>
<dbReference type="SUPFAM" id="SSF57756">
    <property type="entry name" value="Retrovirus zinc finger-like domains"/>
    <property type="match status" value="1"/>
</dbReference>
<dbReference type="PROSITE" id="PS51857">
    <property type="entry name" value="CSD_2"/>
    <property type="match status" value="1"/>
</dbReference>
<dbReference type="PROSITE" id="PS50158">
    <property type="entry name" value="ZF_CCHC"/>
    <property type="match status" value="1"/>
</dbReference>
<gene>
    <name type="primary">LIN28A</name>
    <name type="synonym">LIN28</name>
</gene>
<sequence>MGSVSNQQFAGAKPGEEPSGDSPKAENESQPLHGSGICKWFNVRMGFGFLSMTAKGGAMLDSPVDVFVHQSKLHMEGFRSLKEGEAVEFTFKKSSKGLESIRVTGPGGVFCIGSERRPKSKSLQKRRSKGDRCYNCGGLDHHAKECKLPPQPKKCHFCQSISHMVANCPAKAQQSPSSQGKPAYFREKEDMHSSALLPETRE</sequence>
<feature type="chain" id="PRO_0000253789" description="Protein lin-28 homolog A">
    <location>
        <begin position="1"/>
        <end position="202"/>
    </location>
</feature>
<feature type="domain" description="CSD">
    <location>
        <begin position="33"/>
        <end position="106"/>
    </location>
</feature>
<feature type="zinc finger region" description="CCHC-type 1" evidence="4">
    <location>
        <begin position="131"/>
        <end position="148"/>
    </location>
</feature>
<feature type="zinc finger region" description="CCHC-type 2" evidence="4">
    <location>
        <begin position="153"/>
        <end position="170"/>
    </location>
</feature>
<feature type="region of interest" description="Disordered" evidence="5">
    <location>
        <begin position="1"/>
        <end position="31"/>
    </location>
</feature>
<feature type="region of interest" description="Flexible linker" evidence="1">
    <location>
        <begin position="107"/>
        <end position="130"/>
    </location>
</feature>
<feature type="region of interest" description="Disordered" evidence="5">
    <location>
        <begin position="169"/>
        <end position="202"/>
    </location>
</feature>
<feature type="binding site" evidence="1">
    <location>
        <position position="133"/>
    </location>
    <ligand>
        <name>Zn(2+)</name>
        <dbReference type="ChEBI" id="CHEBI:29105"/>
        <label>1</label>
    </ligand>
</feature>
<feature type="binding site" evidence="1">
    <location>
        <position position="136"/>
    </location>
    <ligand>
        <name>Zn(2+)</name>
        <dbReference type="ChEBI" id="CHEBI:29105"/>
        <label>1</label>
    </ligand>
</feature>
<feature type="binding site" evidence="1">
    <location>
        <position position="141"/>
    </location>
    <ligand>
        <name>Zn(2+)</name>
        <dbReference type="ChEBI" id="CHEBI:29105"/>
        <label>1</label>
    </ligand>
</feature>
<feature type="binding site" evidence="1">
    <location>
        <position position="146"/>
    </location>
    <ligand>
        <name>Zn(2+)</name>
        <dbReference type="ChEBI" id="CHEBI:29105"/>
        <label>1</label>
    </ligand>
</feature>
<feature type="binding site" evidence="1">
    <location>
        <position position="155"/>
    </location>
    <ligand>
        <name>Zn(2+)</name>
        <dbReference type="ChEBI" id="CHEBI:29105"/>
        <label>2</label>
    </ligand>
</feature>
<feature type="binding site" evidence="1">
    <location>
        <position position="158"/>
    </location>
    <ligand>
        <name>Zn(2+)</name>
        <dbReference type="ChEBI" id="CHEBI:29105"/>
        <label>2</label>
    </ligand>
</feature>
<feature type="binding site" evidence="1">
    <location>
        <position position="163"/>
    </location>
    <ligand>
        <name>Zn(2+)</name>
        <dbReference type="ChEBI" id="CHEBI:29105"/>
        <label>2</label>
    </ligand>
</feature>
<feature type="binding site" evidence="1">
    <location>
        <position position="168"/>
    </location>
    <ligand>
        <name>Zn(2+)</name>
        <dbReference type="ChEBI" id="CHEBI:29105"/>
        <label>2</label>
    </ligand>
</feature>
<accession>Q45KJ5</accession>
<name>LN28A_CHICK</name>
<comment type="function">
    <text evidence="2 3">RNA-binding protein that inhibits processing of pre-let-7 miRNAs and regulates translation of mRNAs that control developmental timing, pluripotency and metabolism. Seems to recognize a common structural G-quartet (G4) feature in its miRNA and mRNA targets (By similarity). 'Translational enhancer' that drives specific mRNAs to polysomes and increases the efficiency of protein synthesis. Its association with the translational machinery and target mRNAs results in an increased number of initiation events per molecule of mRNA and, indirectly, in mRNA stabilization. Suppressor of microRNA (miRNA) biogenesis, including that of let-7. Binds specific target miRNA precursors (pre-miRNAs), recognizing an 5'-GGAG-3' motif found in their terminal loop, and recruits uridylyltransferase. This results in the terminal uridylation of target pre-miRNAs. Uridylated pre-miRNAs fail to be processed by Dicer and undergo degradation (By similarity). Localized to the periendoplasmic reticulum area, binds to a large number of spliced mRNAs and inhibits the translation of mRNAs destined for the ER, reducing the synthesis of transmembrane proteins, ER or Golgi lumen proteins, and secretory proteins. Binds to and enhances the translation of mRNAs for several metabolic enzymes, increasing glycolysis and oxidative phosphorylation. Which, with the let-7 repression may enhance tissue repair in adult tissue (By similarity).</text>
</comment>
<comment type="subunit">
    <text evidence="2">Monomer.</text>
</comment>
<comment type="subcellular location">
    <subcellularLocation>
        <location evidence="2">Cytoplasm</location>
    </subcellularLocation>
    <subcellularLocation>
        <location evidence="2">Rough endoplasmic reticulum</location>
    </subcellularLocation>
    <subcellularLocation>
        <location evidence="3">Cytoplasm</location>
        <location evidence="3">P-body</location>
    </subcellularLocation>
    <subcellularLocation>
        <location evidence="2">Cytoplasm</location>
        <location evidence="2">Stress granule</location>
    </subcellularLocation>
    <subcellularLocation>
        <location evidence="2">Nucleus</location>
        <location evidence="2">Nucleolus</location>
    </subcellularLocation>
    <text evidence="2">Predominantly cytoplasmic. In the cytoplasm, localizes to peri-endoplasmic reticulum regions and may be bound to the cytosolic surface of rough endoplasmic reticulum (ER) on which ER-associated mRNAs are translated. Shuttle from the nucleus to the cytoplasm requires RNA-binding.</text>
</comment>
<comment type="domain">
    <text evidence="1">The CCHC zinc fingers interact with the GGAG motif at the 3' end of let-7 miRNAs precursors, more generally they bind the 5'-NGNNG-3' consensus motif with micromolar affinity. The CSD domain recognizes the loop at the 5' end. The flexible linker allows accommodating variable sequences and lengths among let-7 family members (By similarity).</text>
</comment>
<comment type="similarity">
    <text evidence="6">Belongs to the lin-28 family.</text>
</comment>
<organism>
    <name type="scientific">Gallus gallus</name>
    <name type="common">Chicken</name>
    <dbReference type="NCBI Taxonomy" id="9031"/>
    <lineage>
        <taxon>Eukaryota</taxon>
        <taxon>Metazoa</taxon>
        <taxon>Chordata</taxon>
        <taxon>Craniata</taxon>
        <taxon>Vertebrata</taxon>
        <taxon>Euteleostomi</taxon>
        <taxon>Archelosauria</taxon>
        <taxon>Archosauria</taxon>
        <taxon>Dinosauria</taxon>
        <taxon>Saurischia</taxon>
        <taxon>Theropoda</taxon>
        <taxon>Coelurosauria</taxon>
        <taxon>Aves</taxon>
        <taxon>Neognathae</taxon>
        <taxon>Galloanserae</taxon>
        <taxon>Galliformes</taxon>
        <taxon>Phasianidae</taxon>
        <taxon>Phasianinae</taxon>
        <taxon>Gallus</taxon>
    </lineage>
</organism>
<proteinExistence type="evidence at transcript level"/>
<protein>
    <recommendedName>
        <fullName>Protein lin-28 homolog A</fullName>
        <shortName>Lin-28A</shortName>
    </recommendedName>
</protein>
<reference key="1">
    <citation type="submission" date="2005-11" db="EMBL/GenBank/DDBJ databases">
        <title>Expression of Lin28A and Lin28B in post-implantation mouse embryos.</title>
        <authorList>
            <person name="Moss E.G."/>
            <person name="Kemper K."/>
        </authorList>
    </citation>
    <scope>NUCLEOTIDE SEQUENCE [MRNA]</scope>
</reference>